<proteinExistence type="evidence at protein level"/>
<feature type="transit peptide" description="Chloroplast" evidence="4">
    <location>
        <begin position="1"/>
        <end status="unknown"/>
    </location>
</feature>
<feature type="transit peptide" description="Thylakoid" evidence="1 2">
    <location>
        <begin status="unknown"/>
        <end position="71"/>
    </location>
</feature>
<feature type="chain" id="PRO_0000022536" description="PsbP domain-containing protein 4, chloroplastic">
    <location>
        <begin position="72"/>
        <end position="260"/>
    </location>
</feature>
<feature type="sequence conflict" description="In Ref. 4; AAK49577." evidence="4" ref="4">
    <original>V</original>
    <variation>G</variation>
    <location>
        <position position="51"/>
    </location>
</feature>
<feature type="sequence conflict" description="In Ref. 4; AAK49577." evidence="4" ref="4">
    <original>V</original>
    <variation>D</variation>
    <location>
        <position position="57"/>
    </location>
</feature>
<feature type="sequence conflict" description="In Ref. 4; AAK49577." evidence="4" ref="4">
    <original>A</original>
    <variation>G</variation>
    <location>
        <position position="62"/>
    </location>
</feature>
<feature type="sequence conflict" description="In Ref. 4; AAK49577." evidence="4" ref="4">
    <original>V</original>
    <variation>D</variation>
    <location>
        <position position="72"/>
    </location>
</feature>
<feature type="sequence conflict" description="In Ref. 4; AAK49577." evidence="4" ref="4">
    <original>VP</original>
    <variation>ET</variation>
    <location>
        <begin position="82"/>
        <end position="83"/>
    </location>
</feature>
<feature type="sequence conflict" description="In Ref. 4; AAK49577." evidence="4" ref="4">
    <original>S</original>
    <variation>N</variation>
    <location>
        <position position="86"/>
    </location>
</feature>
<feature type="sequence conflict" description="In Ref. 4; AAK49577." evidence="4" ref="4">
    <original>S</original>
    <variation>L</variation>
    <location>
        <position position="103"/>
    </location>
</feature>
<feature type="sequence conflict" description="In Ref. 4; AAK49577." evidence="4" ref="4">
    <original>V</original>
    <variation>D</variation>
    <location>
        <position position="108"/>
    </location>
</feature>
<feature type="sequence conflict" description="In Ref. 4; AAK49577." evidence="4" ref="4">
    <original>SP</original>
    <variation>RT</variation>
    <location>
        <begin position="111"/>
        <end position="112"/>
    </location>
</feature>
<feature type="sequence conflict" description="In Ref. 4; AAK49577." evidence="4" ref="4">
    <original>SVPQDWNEVPV</original>
    <variation>AGAEDCNEAPA</variation>
    <location>
        <begin position="119"/>
        <end position="129"/>
    </location>
</feature>
<feature type="sequence conflict" description="In Ref. 4; AAK49577." evidence="4" ref="4">
    <original>G</original>
    <variation>A</variation>
    <location>
        <position position="135"/>
    </location>
</feature>
<feature type="sequence conflict" description="In Ref. 4; AAK49577." evidence="4" ref="4">
    <original>IDLRFA</original>
    <variation>MDWRCG</variation>
    <location>
        <begin position="139"/>
        <end position="144"/>
    </location>
</feature>
<feature type="sequence conflict" description="In Ref. 4; AAK49577." evidence="4" ref="4">
    <original>EG</original>
    <variation>QA</variation>
    <location>
        <begin position="148"/>
        <end position="149"/>
    </location>
</feature>
<feature type="sequence conflict" description="In Ref. 4; AAK49577." evidence="4" ref="4">
    <original>Y</original>
    <variation>C</variation>
    <location>
        <position position="232"/>
    </location>
</feature>
<organism>
    <name type="scientific">Arabidopsis thaliana</name>
    <name type="common">Mouse-ear cress</name>
    <dbReference type="NCBI Taxonomy" id="3702"/>
    <lineage>
        <taxon>Eukaryota</taxon>
        <taxon>Viridiplantae</taxon>
        <taxon>Streptophyta</taxon>
        <taxon>Embryophyta</taxon>
        <taxon>Tracheophyta</taxon>
        <taxon>Spermatophyta</taxon>
        <taxon>Magnoliopsida</taxon>
        <taxon>eudicotyledons</taxon>
        <taxon>Gunneridae</taxon>
        <taxon>Pentapetalae</taxon>
        <taxon>rosids</taxon>
        <taxon>malvids</taxon>
        <taxon>Brassicales</taxon>
        <taxon>Brassicaceae</taxon>
        <taxon>Camelineae</taxon>
        <taxon>Arabidopsis</taxon>
    </lineage>
</organism>
<sequence length="260" mass="28501">MMETALLRYCVNFSGHKKISAHQRSNSEIPKTSPGGCEDEWCARVLSRRSVMASGLVSSTTALAFPREGLAVVKQGLLAGRVPGLSEPDEEGWRTYRRPDEKSGGHGVGWSPIIPYAFSVPQDWNEVPVSIADLGGTEIDLRFASPKEGRLSVIVAPVLRFADNLGDDVKIENIGQPAKVINAFGPEVIGENVEGKVLSSNVAEHDGRLYYQFELEPPHVLITATAAGNRLYLFSVTGNGLQWKRHYKDLKRIASSFRIV</sequence>
<comment type="subcellular location">
    <subcellularLocation>
        <location evidence="2 3">Plastid</location>
        <location evidence="2 3">Chloroplast thylakoid lumen</location>
    </subcellularLocation>
</comment>
<comment type="similarity">
    <text evidence="4">Belongs to the PsbP family.</text>
</comment>
<comment type="sequence caution" evidence="4">
    <conflict type="erroneous gene model prediction">
        <sequence resource="EMBL-CDS" id="AAC00624"/>
    </conflict>
</comment>
<comment type="sequence caution" evidence="4">
    <conflict type="frameshift">
        <sequence resource="EMBL-CDS" id="AAK49577"/>
    </conflict>
</comment>
<keyword id="KW-0150">Chloroplast</keyword>
<keyword id="KW-0903">Direct protein sequencing</keyword>
<keyword id="KW-0934">Plastid</keyword>
<keyword id="KW-1185">Reference proteome</keyword>
<keyword id="KW-0793">Thylakoid</keyword>
<keyword id="KW-0809">Transit peptide</keyword>
<gene>
    <name type="primary">PPD4</name>
    <name type="ordered locus">At1g77090</name>
    <name type="ORF">F22K20.16</name>
</gene>
<dbReference type="EMBL" id="AC002291">
    <property type="protein sequence ID" value="AAC00624.1"/>
    <property type="status" value="ALT_SEQ"/>
    <property type="molecule type" value="Genomic_DNA"/>
</dbReference>
<dbReference type="EMBL" id="CP002684">
    <property type="protein sequence ID" value="AEE35933.1"/>
    <property type="molecule type" value="Genomic_DNA"/>
</dbReference>
<dbReference type="EMBL" id="AK228434">
    <property type="status" value="NOT_ANNOTATED_CDS"/>
    <property type="molecule type" value="mRNA"/>
</dbReference>
<dbReference type="EMBL" id="AF370571">
    <property type="protein sequence ID" value="AAK49577.1"/>
    <property type="status" value="ALT_FRAME"/>
    <property type="molecule type" value="mRNA"/>
</dbReference>
<dbReference type="PIR" id="G96799">
    <property type="entry name" value="G96799"/>
</dbReference>
<dbReference type="RefSeq" id="NP_565149.2">
    <property type="nucleotide sequence ID" value="NM_106359.5"/>
</dbReference>
<dbReference type="SMR" id="O49292"/>
<dbReference type="FunCoup" id="O49292">
    <property type="interactions" value="1306"/>
</dbReference>
<dbReference type="STRING" id="3702.O49292"/>
<dbReference type="iPTMnet" id="O49292"/>
<dbReference type="PaxDb" id="3702-AT1G77090.1"/>
<dbReference type="ProteomicsDB" id="249040"/>
<dbReference type="EnsemblPlants" id="AT1G77090.1">
    <property type="protein sequence ID" value="AT1G77090.1"/>
    <property type="gene ID" value="AT1G77090"/>
</dbReference>
<dbReference type="GeneID" id="844043"/>
<dbReference type="Gramene" id="AT1G77090.1">
    <property type="protein sequence ID" value="AT1G77090.1"/>
    <property type="gene ID" value="AT1G77090"/>
</dbReference>
<dbReference type="KEGG" id="ath:AT1G77090"/>
<dbReference type="Araport" id="AT1G77090"/>
<dbReference type="TAIR" id="AT1G77090"/>
<dbReference type="eggNOG" id="ENOG502QVAW">
    <property type="taxonomic scope" value="Eukaryota"/>
</dbReference>
<dbReference type="HOGENOM" id="CLU_078654_0_0_1"/>
<dbReference type="InParanoid" id="O49292"/>
<dbReference type="OMA" id="SPMIPYS"/>
<dbReference type="OrthoDB" id="496416at2759"/>
<dbReference type="PhylomeDB" id="O49292"/>
<dbReference type="BioCyc" id="MetaCyc:AT1G77090-MONOMER"/>
<dbReference type="PRO" id="PR:O49292"/>
<dbReference type="Proteomes" id="UP000006548">
    <property type="component" value="Chromosome 1"/>
</dbReference>
<dbReference type="ExpressionAtlas" id="O49292">
    <property type="expression patterns" value="baseline and differential"/>
</dbReference>
<dbReference type="GO" id="GO:0009507">
    <property type="term" value="C:chloroplast"/>
    <property type="evidence" value="ECO:0007005"/>
    <property type="project" value="TAIR"/>
</dbReference>
<dbReference type="GO" id="GO:0009570">
    <property type="term" value="C:chloroplast stroma"/>
    <property type="evidence" value="ECO:0007005"/>
    <property type="project" value="TAIR"/>
</dbReference>
<dbReference type="GO" id="GO:0009534">
    <property type="term" value="C:chloroplast thylakoid"/>
    <property type="evidence" value="ECO:0007005"/>
    <property type="project" value="TAIR"/>
</dbReference>
<dbReference type="GO" id="GO:0009543">
    <property type="term" value="C:chloroplast thylakoid lumen"/>
    <property type="evidence" value="ECO:0007669"/>
    <property type="project" value="UniProtKB-SubCell"/>
</dbReference>
<dbReference type="GO" id="GO:0005829">
    <property type="term" value="C:cytosol"/>
    <property type="evidence" value="ECO:0007005"/>
    <property type="project" value="TAIR"/>
</dbReference>
<dbReference type="GO" id="GO:0019898">
    <property type="term" value="C:extrinsic component of membrane"/>
    <property type="evidence" value="ECO:0007669"/>
    <property type="project" value="InterPro"/>
</dbReference>
<dbReference type="GO" id="GO:0005739">
    <property type="term" value="C:mitochondrion"/>
    <property type="evidence" value="ECO:0007005"/>
    <property type="project" value="TAIR"/>
</dbReference>
<dbReference type="GO" id="GO:0009654">
    <property type="term" value="C:photosystem II oxygen evolving complex"/>
    <property type="evidence" value="ECO:0007669"/>
    <property type="project" value="InterPro"/>
</dbReference>
<dbReference type="GO" id="GO:0009579">
    <property type="term" value="C:thylakoid"/>
    <property type="evidence" value="ECO:0007005"/>
    <property type="project" value="TAIR"/>
</dbReference>
<dbReference type="GO" id="GO:0031977">
    <property type="term" value="C:thylakoid lumen"/>
    <property type="evidence" value="ECO:0007005"/>
    <property type="project" value="TAIR"/>
</dbReference>
<dbReference type="GO" id="GO:0005509">
    <property type="term" value="F:calcium ion binding"/>
    <property type="evidence" value="ECO:0007669"/>
    <property type="project" value="InterPro"/>
</dbReference>
<dbReference type="GO" id="GO:0015979">
    <property type="term" value="P:photosynthesis"/>
    <property type="evidence" value="ECO:0007669"/>
    <property type="project" value="InterPro"/>
</dbReference>
<dbReference type="FunFam" id="3.40.1000.10:FF:000012">
    <property type="entry name" value="PsbP domain-containing protein 4, chloroplastic"/>
    <property type="match status" value="1"/>
</dbReference>
<dbReference type="Gene3D" id="3.40.1000.10">
    <property type="entry name" value="Mog1/PsbP, alpha/beta/alpha sandwich"/>
    <property type="match status" value="1"/>
</dbReference>
<dbReference type="InterPro" id="IPR016123">
    <property type="entry name" value="Mog1/PsbP_a/b/a-sand"/>
</dbReference>
<dbReference type="InterPro" id="IPR002683">
    <property type="entry name" value="PsbP_C"/>
</dbReference>
<dbReference type="PANTHER" id="PTHR31407">
    <property type="match status" value="1"/>
</dbReference>
<dbReference type="PANTHER" id="PTHR31407:SF38">
    <property type="entry name" value="PSBP DOMAIN-CONTAINING PROTEIN 4, CHLOROPLASTIC"/>
    <property type="match status" value="1"/>
</dbReference>
<dbReference type="Pfam" id="PF01789">
    <property type="entry name" value="PsbP"/>
    <property type="match status" value="1"/>
</dbReference>
<dbReference type="SUPFAM" id="SSF55724">
    <property type="entry name" value="Mog1p/PsbP-like"/>
    <property type="match status" value="1"/>
</dbReference>
<accession>O49292</accession>
<accession>Q94JX3</accession>
<name>PPD4_ARATH</name>
<evidence type="ECO:0000269" key="1">
    <source>
    </source>
</evidence>
<evidence type="ECO:0000269" key="2">
    <source>
    </source>
</evidence>
<evidence type="ECO:0000269" key="3">
    <source>
    </source>
</evidence>
<evidence type="ECO:0000305" key="4"/>
<reference key="1">
    <citation type="journal article" date="2000" name="Nature">
        <title>Sequence and analysis of chromosome 1 of the plant Arabidopsis thaliana.</title>
        <authorList>
            <person name="Theologis A."/>
            <person name="Ecker J.R."/>
            <person name="Palm C.J."/>
            <person name="Federspiel N.A."/>
            <person name="Kaul S."/>
            <person name="White O."/>
            <person name="Alonso J."/>
            <person name="Altafi H."/>
            <person name="Araujo R."/>
            <person name="Bowman C.L."/>
            <person name="Brooks S.Y."/>
            <person name="Buehler E."/>
            <person name="Chan A."/>
            <person name="Chao Q."/>
            <person name="Chen H."/>
            <person name="Cheuk R.F."/>
            <person name="Chin C.W."/>
            <person name="Chung M.K."/>
            <person name="Conn L."/>
            <person name="Conway A.B."/>
            <person name="Conway A.R."/>
            <person name="Creasy T.H."/>
            <person name="Dewar K."/>
            <person name="Dunn P."/>
            <person name="Etgu P."/>
            <person name="Feldblyum T.V."/>
            <person name="Feng J.-D."/>
            <person name="Fong B."/>
            <person name="Fujii C.Y."/>
            <person name="Gill J.E."/>
            <person name="Goldsmith A.D."/>
            <person name="Haas B."/>
            <person name="Hansen N.F."/>
            <person name="Hughes B."/>
            <person name="Huizar L."/>
            <person name="Hunter J.L."/>
            <person name="Jenkins J."/>
            <person name="Johnson-Hopson C."/>
            <person name="Khan S."/>
            <person name="Khaykin E."/>
            <person name="Kim C.J."/>
            <person name="Koo H.L."/>
            <person name="Kremenetskaia I."/>
            <person name="Kurtz D.B."/>
            <person name="Kwan A."/>
            <person name="Lam B."/>
            <person name="Langin-Hooper S."/>
            <person name="Lee A."/>
            <person name="Lee J.M."/>
            <person name="Lenz C.A."/>
            <person name="Li J.H."/>
            <person name="Li Y.-P."/>
            <person name="Lin X."/>
            <person name="Liu S.X."/>
            <person name="Liu Z.A."/>
            <person name="Luros J.S."/>
            <person name="Maiti R."/>
            <person name="Marziali A."/>
            <person name="Militscher J."/>
            <person name="Miranda M."/>
            <person name="Nguyen M."/>
            <person name="Nierman W.C."/>
            <person name="Osborne B.I."/>
            <person name="Pai G."/>
            <person name="Peterson J."/>
            <person name="Pham P.K."/>
            <person name="Rizzo M."/>
            <person name="Rooney T."/>
            <person name="Rowley D."/>
            <person name="Sakano H."/>
            <person name="Salzberg S.L."/>
            <person name="Schwartz J.R."/>
            <person name="Shinn P."/>
            <person name="Southwick A.M."/>
            <person name="Sun H."/>
            <person name="Tallon L.J."/>
            <person name="Tambunga G."/>
            <person name="Toriumi M.J."/>
            <person name="Town C.D."/>
            <person name="Utterback T."/>
            <person name="Van Aken S."/>
            <person name="Vaysberg M."/>
            <person name="Vysotskaia V.S."/>
            <person name="Walker M."/>
            <person name="Wu D."/>
            <person name="Yu G."/>
            <person name="Fraser C.M."/>
            <person name="Venter J.C."/>
            <person name="Davis R.W."/>
        </authorList>
    </citation>
    <scope>NUCLEOTIDE SEQUENCE [LARGE SCALE GENOMIC DNA]</scope>
    <source>
        <strain>cv. Columbia</strain>
    </source>
</reference>
<reference key="2">
    <citation type="journal article" date="2017" name="Plant J.">
        <title>Araport11: a complete reannotation of the Arabidopsis thaliana reference genome.</title>
        <authorList>
            <person name="Cheng C.Y."/>
            <person name="Krishnakumar V."/>
            <person name="Chan A.P."/>
            <person name="Thibaud-Nissen F."/>
            <person name="Schobel S."/>
            <person name="Town C.D."/>
        </authorList>
    </citation>
    <scope>GENOME REANNOTATION</scope>
    <source>
        <strain>cv. Columbia</strain>
    </source>
</reference>
<reference key="3">
    <citation type="submission" date="2006-07" db="EMBL/GenBank/DDBJ databases">
        <title>Large-scale analysis of RIKEN Arabidopsis full-length (RAFL) cDNAs.</title>
        <authorList>
            <person name="Totoki Y."/>
            <person name="Seki M."/>
            <person name="Ishida J."/>
            <person name="Nakajima M."/>
            <person name="Enju A."/>
            <person name="Kamiya A."/>
            <person name="Narusaka M."/>
            <person name="Shin-i T."/>
            <person name="Nakagawa M."/>
            <person name="Sakamoto N."/>
            <person name="Oishi K."/>
            <person name="Kohara Y."/>
            <person name="Kobayashi M."/>
            <person name="Toyoda A."/>
            <person name="Sakaki Y."/>
            <person name="Sakurai T."/>
            <person name="Iida K."/>
            <person name="Akiyama K."/>
            <person name="Satou M."/>
            <person name="Toyoda T."/>
            <person name="Konagaya A."/>
            <person name="Carninci P."/>
            <person name="Kawai J."/>
            <person name="Hayashizaki Y."/>
            <person name="Shinozaki K."/>
        </authorList>
    </citation>
    <scope>NUCLEOTIDE SEQUENCE [LARGE SCALE MRNA]</scope>
    <source>
        <strain>cv. Columbia</strain>
    </source>
</reference>
<reference key="4">
    <citation type="journal article" date="2003" name="Science">
        <title>Empirical analysis of transcriptional activity in the Arabidopsis genome.</title>
        <authorList>
            <person name="Yamada K."/>
            <person name="Lim J."/>
            <person name="Dale J.M."/>
            <person name="Chen H."/>
            <person name="Shinn P."/>
            <person name="Palm C.J."/>
            <person name="Southwick A.M."/>
            <person name="Wu H.C."/>
            <person name="Kim C.J."/>
            <person name="Nguyen M."/>
            <person name="Pham P.K."/>
            <person name="Cheuk R.F."/>
            <person name="Karlin-Newmann G."/>
            <person name="Liu S.X."/>
            <person name="Lam B."/>
            <person name="Sakano H."/>
            <person name="Wu T."/>
            <person name="Yu G."/>
            <person name="Miranda M."/>
            <person name="Quach H.L."/>
            <person name="Tripp M."/>
            <person name="Chang C.H."/>
            <person name="Lee J.M."/>
            <person name="Toriumi M.J."/>
            <person name="Chan M.M."/>
            <person name="Tang C.C."/>
            <person name="Onodera C.S."/>
            <person name="Deng J.M."/>
            <person name="Akiyama K."/>
            <person name="Ansari Y."/>
            <person name="Arakawa T."/>
            <person name="Banh J."/>
            <person name="Banno F."/>
            <person name="Bowser L."/>
            <person name="Brooks S.Y."/>
            <person name="Carninci P."/>
            <person name="Chao Q."/>
            <person name="Choy N."/>
            <person name="Enju A."/>
            <person name="Goldsmith A.D."/>
            <person name="Gurjal M."/>
            <person name="Hansen N.F."/>
            <person name="Hayashizaki Y."/>
            <person name="Johnson-Hopson C."/>
            <person name="Hsuan V.W."/>
            <person name="Iida K."/>
            <person name="Karnes M."/>
            <person name="Khan S."/>
            <person name="Koesema E."/>
            <person name="Ishida J."/>
            <person name="Jiang P.X."/>
            <person name="Jones T."/>
            <person name="Kawai J."/>
            <person name="Kamiya A."/>
            <person name="Meyers C."/>
            <person name="Nakajima M."/>
            <person name="Narusaka M."/>
            <person name="Seki M."/>
            <person name="Sakurai T."/>
            <person name="Satou M."/>
            <person name="Tamse R."/>
            <person name="Vaysberg M."/>
            <person name="Wallender E.K."/>
            <person name="Wong C."/>
            <person name="Yamamura Y."/>
            <person name="Yuan S."/>
            <person name="Shinozaki K."/>
            <person name="Davis R.W."/>
            <person name="Theologis A."/>
            <person name="Ecker J.R."/>
        </authorList>
    </citation>
    <scope>NUCLEOTIDE SEQUENCE [LARGE SCALE MRNA] OF 2-260</scope>
    <source>
        <strain>cv. Columbia</strain>
    </source>
</reference>
<reference key="5">
    <citation type="journal article" date="2000" name="FEBS Lett.">
        <title>A peroxidase homologue and novel plastocyanin located by proteomics to the Arabidopsis chloroplast thylakoid lumen.</title>
        <authorList>
            <person name="Kieselbach T."/>
            <person name="Bystedt M."/>
            <person name="Hynds P."/>
            <person name="Robinson C."/>
            <person name="Schroeder W.P."/>
        </authorList>
    </citation>
    <scope>PROTEIN SEQUENCE OF 72-88</scope>
    <source>
        <strain>cv. Columbia</strain>
    </source>
</reference>
<reference key="6">
    <citation type="journal article" date="2002" name="J. Biol. Chem.">
        <title>Proteome map of the chloroplast lumen of Arabidopsis thaliana.</title>
        <authorList>
            <person name="Schubert M."/>
            <person name="Petersson U.A."/>
            <person name="Haas B.J."/>
            <person name="Funk C."/>
            <person name="Schroeder W.P."/>
            <person name="Kieselbach T."/>
        </authorList>
    </citation>
    <scope>PROTEIN SEQUENCE OF 72-90</scope>
    <scope>SUBCELLULAR LOCATION</scope>
</reference>
<reference key="7">
    <citation type="journal article" date="2007" name="Plant Physiol.">
        <title>Distinct functions for the two PsbP-like proteins PPL1 and PPL2 in the chloroplast thylakoid lumen of Arabidopsis.</title>
        <authorList>
            <person name="Ishihara S."/>
            <person name="Takabayashi A."/>
            <person name="Ido K."/>
            <person name="Endo T."/>
            <person name="Ifuku K."/>
            <person name="Sato F."/>
        </authorList>
    </citation>
    <scope>GENE FAMILY</scope>
    <scope>NOMENCLATURE</scope>
</reference>
<reference key="8">
    <citation type="journal article" date="2008" name="PLoS ONE">
        <title>Sorting signals, N-terminal modifications and abundance of the chloroplast proteome.</title>
        <authorList>
            <person name="Zybailov B."/>
            <person name="Rutschow H."/>
            <person name="Friso G."/>
            <person name="Rudella A."/>
            <person name="Emanuelsson O."/>
            <person name="Sun Q."/>
            <person name="van Wijk K.J."/>
        </authorList>
    </citation>
    <scope>IDENTIFICATION BY MASS SPECTROMETRY</scope>
    <scope>SUBCELLULAR LOCATION [LARGE SCALE ANALYSIS]</scope>
</reference>
<protein>
    <recommendedName>
        <fullName>PsbP domain-containing protein 4, chloroplastic</fullName>
    </recommendedName>
    <alternativeName>
        <fullName>OEC23-like protein 5</fullName>
    </alternativeName>
</protein>